<keyword id="KW-0010">Activator</keyword>
<keyword id="KW-0156">Chromatin regulator</keyword>
<keyword id="KW-0509">mRNA transport</keyword>
<keyword id="KW-0539">Nucleus</keyword>
<keyword id="KW-0653">Protein transport</keyword>
<keyword id="KW-1185">Reference proteome</keyword>
<keyword id="KW-0804">Transcription</keyword>
<keyword id="KW-0805">Transcription regulation</keyword>
<keyword id="KW-0811">Translocation</keyword>
<keyword id="KW-0813">Transport</keyword>
<reference key="1">
    <citation type="submission" date="2008-05" db="EMBL/GenBank/DDBJ databases">
        <authorList>
            <consortium name="NIH - Xenopus Gene Collection (XGC) project"/>
        </authorList>
    </citation>
    <scope>NUCLEOTIDE SEQUENCE [LARGE SCALE MRNA]</scope>
    <source>
        <strain>TGA IC</strain>
        <tissue>Tail</tissue>
    </source>
</reference>
<feature type="chain" id="PRO_0000367549" description="Transcription and mRNA export factor ENY2">
    <location>
        <begin position="1"/>
        <end position="96"/>
    </location>
</feature>
<organism>
    <name type="scientific">Xenopus tropicalis</name>
    <name type="common">Western clawed frog</name>
    <name type="synonym">Silurana tropicalis</name>
    <dbReference type="NCBI Taxonomy" id="8364"/>
    <lineage>
        <taxon>Eukaryota</taxon>
        <taxon>Metazoa</taxon>
        <taxon>Chordata</taxon>
        <taxon>Craniata</taxon>
        <taxon>Vertebrata</taxon>
        <taxon>Euteleostomi</taxon>
        <taxon>Amphibia</taxon>
        <taxon>Batrachia</taxon>
        <taxon>Anura</taxon>
        <taxon>Pipoidea</taxon>
        <taxon>Pipidae</taxon>
        <taxon>Xenopodinae</taxon>
        <taxon>Xenopus</taxon>
        <taxon>Silurana</taxon>
    </lineage>
</organism>
<proteinExistence type="inferred from homology"/>
<dbReference type="EMBL" id="BC166962">
    <property type="protein sequence ID" value="AAI66962.1"/>
    <property type="molecule type" value="mRNA"/>
</dbReference>
<dbReference type="RefSeq" id="NP_001123672.1">
    <property type="nucleotide sequence ID" value="NM_001130200.1"/>
</dbReference>
<dbReference type="SMR" id="B2RYZ5"/>
<dbReference type="FunCoup" id="B2RYZ5">
    <property type="interactions" value="2985"/>
</dbReference>
<dbReference type="STRING" id="8364.ENSXETP00000022951"/>
<dbReference type="PaxDb" id="8364-ENSXETP00000057318"/>
<dbReference type="GeneID" id="100170422"/>
<dbReference type="KEGG" id="xtr:100170422"/>
<dbReference type="AGR" id="Xenbase:XB-GENE-961810"/>
<dbReference type="CTD" id="56943"/>
<dbReference type="Xenbase" id="XB-GENE-961810">
    <property type="gene designation" value="eny2"/>
</dbReference>
<dbReference type="eggNOG" id="KOG4479">
    <property type="taxonomic scope" value="Eukaryota"/>
</dbReference>
<dbReference type="HOGENOM" id="CLU_134052_1_1_1"/>
<dbReference type="InParanoid" id="B2RYZ5"/>
<dbReference type="OMA" id="RLMCRNI"/>
<dbReference type="OrthoDB" id="6221744at2759"/>
<dbReference type="PhylomeDB" id="B2RYZ5"/>
<dbReference type="TreeFam" id="TF326556"/>
<dbReference type="Proteomes" id="UP000008143">
    <property type="component" value="Chromosome 6"/>
</dbReference>
<dbReference type="Bgee" id="ENSXETG00000027483">
    <property type="expression patterns" value="Expressed in 2-cell stage embryo and 12 other cell types or tissues"/>
</dbReference>
<dbReference type="GO" id="GO:0071819">
    <property type="term" value="C:DUBm complex"/>
    <property type="evidence" value="ECO:0007669"/>
    <property type="project" value="UniProtKB-UniRule"/>
</dbReference>
<dbReference type="GO" id="GO:0005643">
    <property type="term" value="C:nuclear pore"/>
    <property type="evidence" value="ECO:0007669"/>
    <property type="project" value="UniProtKB-UniRule"/>
</dbReference>
<dbReference type="GO" id="GO:0005654">
    <property type="term" value="C:nucleoplasm"/>
    <property type="evidence" value="ECO:0007669"/>
    <property type="project" value="UniProtKB-SubCell"/>
</dbReference>
<dbReference type="GO" id="GO:0000124">
    <property type="term" value="C:SAGA complex"/>
    <property type="evidence" value="ECO:0000250"/>
    <property type="project" value="UniProtKB"/>
</dbReference>
<dbReference type="GO" id="GO:0070390">
    <property type="term" value="C:transcription export complex 2"/>
    <property type="evidence" value="ECO:0007669"/>
    <property type="project" value="UniProtKB-UniRule"/>
</dbReference>
<dbReference type="GO" id="GO:0003713">
    <property type="term" value="F:transcription coactivator activity"/>
    <property type="evidence" value="ECO:0000250"/>
    <property type="project" value="UniProtKB"/>
</dbReference>
<dbReference type="GO" id="GO:0006325">
    <property type="term" value="P:chromatin organization"/>
    <property type="evidence" value="ECO:0007669"/>
    <property type="project" value="UniProtKB-KW"/>
</dbReference>
<dbReference type="GO" id="GO:0006406">
    <property type="term" value="P:mRNA export from nucleus"/>
    <property type="evidence" value="ECO:0007669"/>
    <property type="project" value="UniProtKB-UniRule"/>
</dbReference>
<dbReference type="GO" id="GO:0045893">
    <property type="term" value="P:positive regulation of DNA-templated transcription"/>
    <property type="evidence" value="ECO:0000250"/>
    <property type="project" value="UniProtKB"/>
</dbReference>
<dbReference type="GO" id="GO:0015031">
    <property type="term" value="P:protein transport"/>
    <property type="evidence" value="ECO:0007669"/>
    <property type="project" value="UniProtKB-KW"/>
</dbReference>
<dbReference type="GO" id="GO:0006368">
    <property type="term" value="P:transcription elongation by RNA polymerase II"/>
    <property type="evidence" value="ECO:0007669"/>
    <property type="project" value="UniProtKB-UniRule"/>
</dbReference>
<dbReference type="FunFam" id="1.10.246.140:FF:000001">
    <property type="entry name" value="Transcription and mRNA export factor ENY2"/>
    <property type="match status" value="1"/>
</dbReference>
<dbReference type="Gene3D" id="1.10.246.140">
    <property type="match status" value="1"/>
</dbReference>
<dbReference type="HAMAP" id="MF_03046">
    <property type="entry name" value="ENY2_Sus1"/>
    <property type="match status" value="1"/>
</dbReference>
<dbReference type="InterPro" id="IPR018783">
    <property type="entry name" value="TF_ENY2"/>
</dbReference>
<dbReference type="InterPro" id="IPR038212">
    <property type="entry name" value="TF_EnY2_sf"/>
</dbReference>
<dbReference type="PANTHER" id="PTHR12514">
    <property type="entry name" value="ENHANCER OF YELLOW 2 TRANSCRIPTION FACTOR"/>
    <property type="match status" value="1"/>
</dbReference>
<dbReference type="Pfam" id="PF10163">
    <property type="entry name" value="EnY2"/>
    <property type="match status" value="1"/>
</dbReference>
<sequence>MNKDAQMKAAINQKLIETGERERLKELLRAKLIECGWRDQLKAHCKDVINEKGVEHVTVDDLVAEITPKGRALVPDSVKKELLQRIRAFLAQHASL</sequence>
<evidence type="ECO:0000250" key="1"/>
<evidence type="ECO:0000255" key="2">
    <source>
        <dbReference type="HAMAP-Rule" id="MF_03046"/>
    </source>
</evidence>
<protein>
    <recommendedName>
        <fullName evidence="2">Transcription and mRNA export factor ENY2</fullName>
    </recommendedName>
    <alternativeName>
        <fullName evidence="2">Enhancer of yellow 2 transcription factor homolog</fullName>
    </alternativeName>
</protein>
<gene>
    <name type="primary">eny2</name>
</gene>
<comment type="function">
    <text evidence="1">Involved in mRNA export coupled transcription activation by association with both the TREX-2 and the SAGA complexes. The transcription regulatory histone acetylation (HAT) complex SAGA is a multiprotein complex that activates transcription by remodeling chromatin and mediating histone acetylation and deubiquitination. Within the SAGA complex, participates in a subcomplex that specifically deubiquitinates histones. The SAGA complex is recruited to specific gene promoters by activators, where it is required for transcription. The TREX-2 complex functions in docking export-competent ribonucleoprotein particles (mRNPs) to the nuclear entrance of the nuclear pore complex (nuclear basket). TREX-2 participates in mRNA export and accurate chromatin positioning in the nucleus by tethering genes to the nuclear periphery (By similarity).</text>
</comment>
<comment type="subunit">
    <text evidence="1">Component of the nuclear pore complex (NPC)-associated TREX-2 complex (transcription and export complex 2). Component of the SAGA transcription coactivator-HAT complex. Within the SAGA complex, participates in a subcomplex of SAGA called the DUB module (deubiquitination module) (By similarity).</text>
</comment>
<comment type="subcellular location">
    <subcellularLocation>
        <location evidence="2">Nucleus</location>
        <location evidence="2">Nucleoplasm</location>
    </subcellularLocation>
</comment>
<comment type="similarity">
    <text evidence="2">Belongs to the ENY2 family.</text>
</comment>
<accession>B2RYZ5</accession>
<name>ENY2_XENTR</name>